<reference key="1">
    <citation type="journal article" date="2000" name="Proc. Natl. Acad. Sci. U.S.A.">
        <title>Archaeal adaptation to higher temperatures revealed by genomic sequence of Thermoplasma volcanium.</title>
        <authorList>
            <person name="Kawashima T."/>
            <person name="Amano N."/>
            <person name="Koike H."/>
            <person name="Makino S."/>
            <person name="Higuchi S."/>
            <person name="Kawashima-Ohya Y."/>
            <person name="Watanabe K."/>
            <person name="Yamazaki M."/>
            <person name="Kanehori K."/>
            <person name="Kawamoto T."/>
            <person name="Nunoshiba T."/>
            <person name="Yamamoto Y."/>
            <person name="Aramaki H."/>
            <person name="Makino K."/>
            <person name="Suzuki M."/>
        </authorList>
    </citation>
    <scope>NUCLEOTIDE SEQUENCE [LARGE SCALE GENOMIC DNA]</scope>
    <source>
        <strain>ATCC 51530 / DSM 4299 / JCM 9571 / NBRC 15438 / GSS1</strain>
    </source>
</reference>
<feature type="chain" id="PRO_0000152331" description="Sugar fermentation stimulation protein homolog">
    <location>
        <begin position="1"/>
        <end position="216"/>
    </location>
</feature>
<protein>
    <recommendedName>
        <fullName evidence="1">Sugar fermentation stimulation protein homolog</fullName>
    </recommendedName>
</protein>
<gene>
    <name evidence="1" type="primary">sfsA</name>
    <name type="ordered locus">TV0703</name>
    <name type="ORF">TVG0708898</name>
</gene>
<comment type="similarity">
    <text evidence="1">Belongs to the SfsA family.</text>
</comment>
<comment type="sequence caution" evidence="2">
    <conflict type="erroneous initiation">
        <sequence resource="EMBL-CDS" id="BAB59845"/>
    </conflict>
</comment>
<proteinExistence type="inferred from homology"/>
<dbReference type="EMBL" id="BA000011">
    <property type="protein sequence ID" value="BAB59845.1"/>
    <property type="status" value="ALT_INIT"/>
    <property type="molecule type" value="Genomic_DNA"/>
</dbReference>
<dbReference type="RefSeq" id="WP_048053969.1">
    <property type="nucleotide sequence ID" value="NC_002689.2"/>
</dbReference>
<dbReference type="SMR" id="Q97AV6"/>
<dbReference type="STRING" id="273116.gene:9381492"/>
<dbReference type="PaxDb" id="273116-14324919"/>
<dbReference type="GeneID" id="1441810"/>
<dbReference type="KEGG" id="tvo:TVG0708898"/>
<dbReference type="eggNOG" id="arCOG04115">
    <property type="taxonomic scope" value="Archaea"/>
</dbReference>
<dbReference type="HOGENOM" id="CLU_052299_1_0_2"/>
<dbReference type="OrthoDB" id="34139at2157"/>
<dbReference type="PhylomeDB" id="Q97AV6"/>
<dbReference type="Proteomes" id="UP000001017">
    <property type="component" value="Chromosome"/>
</dbReference>
<dbReference type="GO" id="GO:0003677">
    <property type="term" value="F:DNA binding"/>
    <property type="evidence" value="ECO:0007669"/>
    <property type="project" value="InterPro"/>
</dbReference>
<dbReference type="CDD" id="cd22357">
    <property type="entry name" value="SfsA-like"/>
    <property type="match status" value="1"/>
</dbReference>
<dbReference type="Gene3D" id="2.40.50.580">
    <property type="match status" value="1"/>
</dbReference>
<dbReference type="Gene3D" id="3.40.1350.60">
    <property type="match status" value="1"/>
</dbReference>
<dbReference type="HAMAP" id="MF_00095">
    <property type="entry name" value="SfsA"/>
    <property type="match status" value="1"/>
</dbReference>
<dbReference type="InterPro" id="IPR005224">
    <property type="entry name" value="SfsA"/>
</dbReference>
<dbReference type="InterPro" id="IPR040452">
    <property type="entry name" value="SfsA_C"/>
</dbReference>
<dbReference type="InterPro" id="IPR041465">
    <property type="entry name" value="SfsA_N"/>
</dbReference>
<dbReference type="NCBIfam" id="TIGR00230">
    <property type="entry name" value="sfsA"/>
    <property type="match status" value="1"/>
</dbReference>
<dbReference type="PANTHER" id="PTHR30545">
    <property type="entry name" value="SUGAR FERMENTATION STIMULATION PROTEIN A"/>
    <property type="match status" value="1"/>
</dbReference>
<dbReference type="PANTHER" id="PTHR30545:SF2">
    <property type="entry name" value="SUGAR FERMENTATION STIMULATION PROTEIN A"/>
    <property type="match status" value="1"/>
</dbReference>
<dbReference type="Pfam" id="PF03749">
    <property type="entry name" value="SfsA"/>
    <property type="match status" value="1"/>
</dbReference>
<dbReference type="Pfam" id="PF17746">
    <property type="entry name" value="SfsA_N"/>
    <property type="match status" value="1"/>
</dbReference>
<name>SFSA_THEVO</name>
<sequence>MEFTDLLPCTVVERVNRFLVNVKLNDKIVEAHLHDPGRLKEIIYTGNKVLVRRKSGKKTGYRITFGLREDQYILIDSGLHSQIASHFVSQECKPEVKIDDRRLDFACNDIFIEVKGCTLSIDGVAIFPDAPTLRGYEHLRLLERLAQEGKGAYVLFLIFSDATSFRPNSETDPRFSDEFYKALKNGVKFSFKRFSFDGKYLKYSGDILTFDGDDKS</sequence>
<organism>
    <name type="scientific">Thermoplasma volcanium (strain ATCC 51530 / DSM 4299 / JCM 9571 / NBRC 15438 / GSS1)</name>
    <dbReference type="NCBI Taxonomy" id="273116"/>
    <lineage>
        <taxon>Archaea</taxon>
        <taxon>Methanobacteriati</taxon>
        <taxon>Thermoplasmatota</taxon>
        <taxon>Thermoplasmata</taxon>
        <taxon>Thermoplasmatales</taxon>
        <taxon>Thermoplasmataceae</taxon>
        <taxon>Thermoplasma</taxon>
    </lineage>
</organism>
<accession>Q97AV6</accession>
<evidence type="ECO:0000255" key="1">
    <source>
        <dbReference type="HAMAP-Rule" id="MF_00095"/>
    </source>
</evidence>
<evidence type="ECO:0000305" key="2"/>